<organism>
    <name type="scientific">Lactiplantibacillus plantarum (strain ATCC BAA-793 / NCIMB 8826 / WCFS1)</name>
    <name type="common">Lactobacillus plantarum</name>
    <dbReference type="NCBI Taxonomy" id="220668"/>
    <lineage>
        <taxon>Bacteria</taxon>
        <taxon>Bacillati</taxon>
        <taxon>Bacillota</taxon>
        <taxon>Bacilli</taxon>
        <taxon>Lactobacillales</taxon>
        <taxon>Lactobacillaceae</taxon>
        <taxon>Lactiplantibacillus</taxon>
    </lineage>
</organism>
<keyword id="KW-0028">Amino-acid biosynthesis</keyword>
<keyword id="KW-0055">Arginine biosynthesis</keyword>
<keyword id="KW-0067">ATP-binding</keyword>
<keyword id="KW-0436">Ligase</keyword>
<keyword id="KW-0460">Magnesium</keyword>
<keyword id="KW-0464">Manganese</keyword>
<keyword id="KW-0479">Metal-binding</keyword>
<keyword id="KW-0547">Nucleotide-binding</keyword>
<keyword id="KW-0665">Pyrimidine biosynthesis</keyword>
<keyword id="KW-1185">Reference proteome</keyword>
<keyword id="KW-0677">Repeat</keyword>
<reference key="1">
    <citation type="journal article" date="1996" name="Gene">
        <title>Structure and organisation of the pyrimidine biosynthesis pathway genes in Lactobacillus plantarum: a PCR strategy for sequencing without cloning.</title>
        <authorList>
            <person name="Elagoez A."/>
            <person name="Abdi A."/>
            <person name="Hubert J.-C."/>
            <person name="Kammerer B."/>
        </authorList>
    </citation>
    <scope>NUCLEOTIDE SEQUENCE [GENOMIC DNA]</scope>
    <source>
        <strain>ATCC 8014 / CCM 1904 / DSM 20205 / NCDO 82 / NCIB 6376</strain>
    </source>
</reference>
<reference key="2">
    <citation type="journal article" date="2003" name="Proc. Natl. Acad. Sci. U.S.A.">
        <title>Complete genome sequence of Lactobacillus plantarum WCFS1.</title>
        <authorList>
            <person name="Kleerebezem M."/>
            <person name="Boekhorst J."/>
            <person name="van Kranenburg R."/>
            <person name="Molenaar D."/>
            <person name="Kuipers O.P."/>
            <person name="Leer R."/>
            <person name="Tarchini R."/>
            <person name="Peters S.A."/>
            <person name="Sandbrink H.M."/>
            <person name="Fiers M.W.E.J."/>
            <person name="Stiekema W."/>
            <person name="Klein Lankhorst R.M."/>
            <person name="Bron P.A."/>
            <person name="Hoffer S.M."/>
            <person name="Nierop Groot M.N."/>
            <person name="Kerkhoven R."/>
            <person name="De Vries M."/>
            <person name="Ursing B."/>
            <person name="De Vos W.M."/>
            <person name="Siezen R.J."/>
        </authorList>
    </citation>
    <scope>NUCLEOTIDE SEQUENCE [LARGE SCALE GENOMIC DNA]</scope>
    <source>
        <strain>ATCC BAA-793 / NCIMB 8826 / WCFS1</strain>
    </source>
</reference>
<reference key="3">
    <citation type="journal article" date="2012" name="J. Bacteriol.">
        <title>Complete resequencing and reannotation of the Lactobacillus plantarum WCFS1 genome.</title>
        <authorList>
            <person name="Siezen R.J."/>
            <person name="Francke C."/>
            <person name="Renckens B."/>
            <person name="Boekhorst J."/>
            <person name="Wels M."/>
            <person name="Kleerebezem M."/>
            <person name="van Hijum S.A."/>
        </authorList>
    </citation>
    <scope>NUCLEOTIDE SEQUENCE [LARGE SCALE GENOMIC DNA]</scope>
    <scope>GENOME REANNOTATION</scope>
    <source>
        <strain>ATCC BAA-793 / NCIMB 8826 / WCFS1</strain>
    </source>
</reference>
<reference key="4">
    <citation type="journal article" date="2000" name="J. Bacteriol.">
        <title>In Lactobacillus plantarum, carbamoyl phosphate is synthesized by two carbamoyl-phosphate synthetases (CPS): carbon dioxide differentiates the arginine-repressed from the pyrimidine-regulated CPS.</title>
        <authorList>
            <person name="Nicoloff H."/>
            <person name="Hubert J.-C."/>
            <person name="Bringel F."/>
        </authorList>
    </citation>
    <scope>FUNCTION</scope>
    <source>
        <strain>ATCC 8014 / CCM 1904 / DSM 20205 / NCDO 82 / NCIB 6376</strain>
    </source>
</reference>
<feature type="chain" id="PRO_0000145014" description="Carbamoyl phosphate synthase pyrimidine-specific large chain">
    <location>
        <begin position="1"/>
        <end position="1058"/>
    </location>
</feature>
<feature type="domain" description="ATP-grasp 1" evidence="1">
    <location>
        <begin position="133"/>
        <end position="327"/>
    </location>
</feature>
<feature type="domain" description="ATP-grasp 2" evidence="1">
    <location>
        <begin position="671"/>
        <end position="861"/>
    </location>
</feature>
<feature type="domain" description="MGS-like" evidence="1">
    <location>
        <begin position="930"/>
        <end position="1058"/>
    </location>
</feature>
<feature type="region of interest" description="Carboxyphosphate synthetic domain" evidence="1">
    <location>
        <begin position="1"/>
        <end position="401"/>
    </location>
</feature>
<feature type="region of interest" description="Oligomerization domain" evidence="1">
    <location>
        <begin position="402"/>
        <end position="546"/>
    </location>
</feature>
<feature type="region of interest" description="Carbamoyl phosphate synthetic domain" evidence="1">
    <location>
        <begin position="547"/>
        <end position="929"/>
    </location>
</feature>
<feature type="region of interest" description="Allosteric domain" evidence="1">
    <location>
        <begin position="930"/>
        <end position="1058"/>
    </location>
</feature>
<feature type="binding site" evidence="1">
    <location>
        <position position="129"/>
    </location>
    <ligand>
        <name>ATP</name>
        <dbReference type="ChEBI" id="CHEBI:30616"/>
        <label>1</label>
    </ligand>
</feature>
<feature type="binding site" evidence="1">
    <location>
        <position position="169"/>
    </location>
    <ligand>
        <name>ATP</name>
        <dbReference type="ChEBI" id="CHEBI:30616"/>
        <label>1</label>
    </ligand>
</feature>
<feature type="binding site" evidence="1">
    <location>
        <position position="175"/>
    </location>
    <ligand>
        <name>ATP</name>
        <dbReference type="ChEBI" id="CHEBI:30616"/>
        <label>1</label>
    </ligand>
</feature>
<feature type="binding site" evidence="1">
    <location>
        <position position="176"/>
    </location>
    <ligand>
        <name>ATP</name>
        <dbReference type="ChEBI" id="CHEBI:30616"/>
        <label>1</label>
    </ligand>
</feature>
<feature type="binding site" evidence="1">
    <location>
        <position position="208"/>
    </location>
    <ligand>
        <name>ATP</name>
        <dbReference type="ChEBI" id="CHEBI:30616"/>
        <label>1</label>
    </ligand>
</feature>
<feature type="binding site" evidence="1">
    <location>
        <position position="210"/>
    </location>
    <ligand>
        <name>ATP</name>
        <dbReference type="ChEBI" id="CHEBI:30616"/>
        <label>1</label>
    </ligand>
</feature>
<feature type="binding site" evidence="1">
    <location>
        <position position="215"/>
    </location>
    <ligand>
        <name>ATP</name>
        <dbReference type="ChEBI" id="CHEBI:30616"/>
        <label>1</label>
    </ligand>
</feature>
<feature type="binding site" evidence="1">
    <location>
        <position position="241"/>
    </location>
    <ligand>
        <name>ATP</name>
        <dbReference type="ChEBI" id="CHEBI:30616"/>
        <label>1</label>
    </ligand>
</feature>
<feature type="binding site" evidence="1">
    <location>
        <position position="242"/>
    </location>
    <ligand>
        <name>ATP</name>
        <dbReference type="ChEBI" id="CHEBI:30616"/>
        <label>1</label>
    </ligand>
</feature>
<feature type="binding site" evidence="1">
    <location>
        <position position="243"/>
    </location>
    <ligand>
        <name>ATP</name>
        <dbReference type="ChEBI" id="CHEBI:30616"/>
        <label>1</label>
    </ligand>
</feature>
<feature type="binding site" evidence="1">
    <location>
        <position position="284"/>
    </location>
    <ligand>
        <name>ATP</name>
        <dbReference type="ChEBI" id="CHEBI:30616"/>
        <label>1</label>
    </ligand>
</feature>
<feature type="binding site" evidence="1">
    <location>
        <position position="284"/>
    </location>
    <ligand>
        <name>Mg(2+)</name>
        <dbReference type="ChEBI" id="CHEBI:18420"/>
        <label>1</label>
    </ligand>
</feature>
<feature type="binding site" evidence="1">
    <location>
        <position position="284"/>
    </location>
    <ligand>
        <name>Mn(2+)</name>
        <dbReference type="ChEBI" id="CHEBI:29035"/>
        <label>1</label>
    </ligand>
</feature>
<feature type="binding site" evidence="1">
    <location>
        <position position="298"/>
    </location>
    <ligand>
        <name>ATP</name>
        <dbReference type="ChEBI" id="CHEBI:30616"/>
        <label>1</label>
    </ligand>
</feature>
<feature type="binding site" evidence="1">
    <location>
        <position position="298"/>
    </location>
    <ligand>
        <name>Mg(2+)</name>
        <dbReference type="ChEBI" id="CHEBI:18420"/>
        <label>1</label>
    </ligand>
</feature>
<feature type="binding site" evidence="1">
    <location>
        <position position="298"/>
    </location>
    <ligand>
        <name>Mg(2+)</name>
        <dbReference type="ChEBI" id="CHEBI:18420"/>
        <label>2</label>
    </ligand>
</feature>
<feature type="binding site" evidence="1">
    <location>
        <position position="298"/>
    </location>
    <ligand>
        <name>Mn(2+)</name>
        <dbReference type="ChEBI" id="CHEBI:29035"/>
        <label>1</label>
    </ligand>
</feature>
<feature type="binding site" evidence="1">
    <location>
        <position position="298"/>
    </location>
    <ligand>
        <name>Mn(2+)</name>
        <dbReference type="ChEBI" id="CHEBI:29035"/>
        <label>2</label>
    </ligand>
</feature>
<feature type="binding site" evidence="1">
    <location>
        <position position="300"/>
    </location>
    <ligand>
        <name>Mg(2+)</name>
        <dbReference type="ChEBI" id="CHEBI:18420"/>
        <label>2</label>
    </ligand>
</feature>
<feature type="binding site" evidence="1">
    <location>
        <position position="300"/>
    </location>
    <ligand>
        <name>Mn(2+)</name>
        <dbReference type="ChEBI" id="CHEBI:29035"/>
        <label>2</label>
    </ligand>
</feature>
<feature type="binding site" evidence="1">
    <location>
        <position position="707"/>
    </location>
    <ligand>
        <name>ATP</name>
        <dbReference type="ChEBI" id="CHEBI:30616"/>
        <label>2</label>
    </ligand>
</feature>
<feature type="binding site" evidence="1">
    <location>
        <position position="746"/>
    </location>
    <ligand>
        <name>ATP</name>
        <dbReference type="ChEBI" id="CHEBI:30616"/>
        <label>2</label>
    </ligand>
</feature>
<feature type="binding site" evidence="1">
    <location>
        <position position="748"/>
    </location>
    <ligand>
        <name>ATP</name>
        <dbReference type="ChEBI" id="CHEBI:30616"/>
        <label>2</label>
    </ligand>
</feature>
<feature type="binding site" evidence="1">
    <location>
        <position position="752"/>
    </location>
    <ligand>
        <name>ATP</name>
        <dbReference type="ChEBI" id="CHEBI:30616"/>
        <label>2</label>
    </ligand>
</feature>
<feature type="binding site" evidence="1">
    <location>
        <position position="777"/>
    </location>
    <ligand>
        <name>ATP</name>
        <dbReference type="ChEBI" id="CHEBI:30616"/>
        <label>2</label>
    </ligand>
</feature>
<feature type="binding site" evidence="1">
    <location>
        <position position="778"/>
    </location>
    <ligand>
        <name>ATP</name>
        <dbReference type="ChEBI" id="CHEBI:30616"/>
        <label>2</label>
    </ligand>
</feature>
<feature type="binding site" evidence="1">
    <location>
        <position position="779"/>
    </location>
    <ligand>
        <name>ATP</name>
        <dbReference type="ChEBI" id="CHEBI:30616"/>
        <label>2</label>
    </ligand>
</feature>
<feature type="binding site" evidence="1">
    <location>
        <position position="780"/>
    </location>
    <ligand>
        <name>ATP</name>
        <dbReference type="ChEBI" id="CHEBI:30616"/>
        <label>2</label>
    </ligand>
</feature>
<feature type="binding site" evidence="1">
    <location>
        <position position="820"/>
    </location>
    <ligand>
        <name>ATP</name>
        <dbReference type="ChEBI" id="CHEBI:30616"/>
        <label>2</label>
    </ligand>
</feature>
<feature type="binding site" evidence="1">
    <location>
        <position position="820"/>
    </location>
    <ligand>
        <name>Mg(2+)</name>
        <dbReference type="ChEBI" id="CHEBI:18420"/>
        <label>3</label>
    </ligand>
</feature>
<feature type="binding site" evidence="1">
    <location>
        <position position="820"/>
    </location>
    <ligand>
        <name>Mn(2+)</name>
        <dbReference type="ChEBI" id="CHEBI:29035"/>
        <label>3</label>
    </ligand>
</feature>
<feature type="binding site" evidence="1">
    <location>
        <position position="832"/>
    </location>
    <ligand>
        <name>ATP</name>
        <dbReference type="ChEBI" id="CHEBI:30616"/>
        <label>2</label>
    </ligand>
</feature>
<feature type="binding site" evidence="1">
    <location>
        <position position="832"/>
    </location>
    <ligand>
        <name>Mg(2+)</name>
        <dbReference type="ChEBI" id="CHEBI:18420"/>
        <label>3</label>
    </ligand>
</feature>
<feature type="binding site" evidence="1">
    <location>
        <position position="832"/>
    </location>
    <ligand>
        <name>Mg(2+)</name>
        <dbReference type="ChEBI" id="CHEBI:18420"/>
        <label>4</label>
    </ligand>
</feature>
<feature type="binding site" evidence="1">
    <location>
        <position position="832"/>
    </location>
    <ligand>
        <name>Mn(2+)</name>
        <dbReference type="ChEBI" id="CHEBI:29035"/>
        <label>3</label>
    </ligand>
</feature>
<feature type="binding site" evidence="1">
    <location>
        <position position="832"/>
    </location>
    <ligand>
        <name>Mn(2+)</name>
        <dbReference type="ChEBI" id="CHEBI:29035"/>
        <label>4</label>
    </ligand>
</feature>
<feature type="binding site" evidence="1">
    <location>
        <position position="834"/>
    </location>
    <ligand>
        <name>Mg(2+)</name>
        <dbReference type="ChEBI" id="CHEBI:18420"/>
        <label>4</label>
    </ligand>
</feature>
<feature type="binding site" evidence="1">
    <location>
        <position position="834"/>
    </location>
    <ligand>
        <name>Mn(2+)</name>
        <dbReference type="ChEBI" id="CHEBI:29035"/>
        <label>4</label>
    </ligand>
</feature>
<feature type="sequence conflict" description="In Ref. 1; CAA91005." evidence="2" ref="1">
    <original>K</original>
    <variation>E</variation>
    <location>
        <position position="160"/>
    </location>
</feature>
<feature type="sequence conflict" description="In Ref. 1; CAA91005." evidence="2" ref="1">
    <original>PA</original>
    <variation>ST</variation>
    <location>
        <begin position="410"/>
        <end position="411"/>
    </location>
</feature>
<feature type="sequence conflict" description="In Ref. 1; CAA91005." evidence="2" ref="1">
    <original>P</original>
    <variation>Q</variation>
    <location>
        <position position="444"/>
    </location>
</feature>
<feature type="sequence conflict" description="In Ref. 1; CAA91005." evidence="2" ref="1">
    <original>D</original>
    <variation>G</variation>
    <location>
        <position position="862"/>
    </location>
</feature>
<feature type="sequence conflict" description="In Ref. 1; CAA91005." evidence="2" ref="1">
    <original>R</original>
    <variation>H</variation>
    <location>
        <position position="992"/>
    </location>
</feature>
<feature type="sequence conflict" description="In Ref. 1; CAA91005." evidence="2" ref="1">
    <original>I</original>
    <variation>V</variation>
    <location>
        <position position="1003"/>
    </location>
</feature>
<comment type="function">
    <text evidence="2">Small subunit of the glutamine-dependent carbamoyl phosphate synthetase (CPSase). CPSase catalyzes the formation of carbamoyl phosphate from the ammonia moiety of glutamine, carbonate, and phosphate donated by ATP, constituting the first step of the biosynthetic pathway leading to pyrimidine nucleotides. The large subunit (synthetase) binds the substrates ammonia (free or transferred from glutamine from the small subunit), hydrogencarbonate and ATP and carries out an ATP-coupled ligase reaction, activating hydrogencarbonate by forming carboxy phosphate which reacts with ammonia to form carbamoyl phosphate.</text>
</comment>
<comment type="catalytic activity">
    <reaction evidence="1">
        <text>hydrogencarbonate + L-glutamine + 2 ATP + H2O = carbamoyl phosphate + L-glutamate + 2 ADP + phosphate + 2 H(+)</text>
        <dbReference type="Rhea" id="RHEA:18633"/>
        <dbReference type="ChEBI" id="CHEBI:15377"/>
        <dbReference type="ChEBI" id="CHEBI:15378"/>
        <dbReference type="ChEBI" id="CHEBI:17544"/>
        <dbReference type="ChEBI" id="CHEBI:29985"/>
        <dbReference type="ChEBI" id="CHEBI:30616"/>
        <dbReference type="ChEBI" id="CHEBI:43474"/>
        <dbReference type="ChEBI" id="CHEBI:58228"/>
        <dbReference type="ChEBI" id="CHEBI:58359"/>
        <dbReference type="ChEBI" id="CHEBI:456216"/>
        <dbReference type="EC" id="6.3.5.5"/>
    </reaction>
</comment>
<comment type="catalytic activity">
    <molecule>Carbamoyl phosphate synthase pyrimidine-specific large chain</molecule>
    <reaction evidence="1">
        <text>hydrogencarbonate + NH4(+) + 2 ATP = carbamoyl phosphate + 2 ADP + phosphate + 2 H(+)</text>
        <dbReference type="Rhea" id="RHEA:18029"/>
        <dbReference type="ChEBI" id="CHEBI:15378"/>
        <dbReference type="ChEBI" id="CHEBI:17544"/>
        <dbReference type="ChEBI" id="CHEBI:28938"/>
        <dbReference type="ChEBI" id="CHEBI:30616"/>
        <dbReference type="ChEBI" id="CHEBI:43474"/>
        <dbReference type="ChEBI" id="CHEBI:58228"/>
        <dbReference type="ChEBI" id="CHEBI:456216"/>
        <dbReference type="EC" id="6.3.4.16"/>
    </reaction>
</comment>
<comment type="cofactor">
    <cofactor evidence="1">
        <name>Mg(2+)</name>
        <dbReference type="ChEBI" id="CHEBI:18420"/>
    </cofactor>
    <cofactor evidence="1">
        <name>Mn(2+)</name>
        <dbReference type="ChEBI" id="CHEBI:29035"/>
    </cofactor>
    <text evidence="1">Binds 4 Mg(2+) or Mn(2+) ions per subunit.</text>
</comment>
<comment type="pathway">
    <text evidence="1">Amino-acid biosynthesis; L-arginine biosynthesis; carbamoyl phosphate from bicarbonate: step 1/1.</text>
</comment>
<comment type="pathway">
    <text evidence="1">Pyrimidine metabolism; UMP biosynthesis via de novo pathway; (S)-dihydroorotate from bicarbonate: step 1/3.</text>
</comment>
<comment type="subunit">
    <text evidence="1">Composed of two chains; the small (or glutamine) chain promotes the hydrolysis of glutamine to ammonia, which is used by the large (or ammonia) chain to synthesize carbamoyl phosphate. Tetramer of heterodimers (alpha,beta)4.</text>
</comment>
<comment type="domain">
    <text evidence="1">The large subunit is composed of 2 ATP-grasp domains that are involved in binding the 2 ATP molecules needed for carbamoyl phosphate synthesis. The N-terminal ATP-grasp domain (referred to as the carboxyphosphate synthetic component) catalyzes the ATP-dependent phosphorylation of hydrogencarbonate to carboxyphosphate and the subsequent nucleophilic attack by ammonia to form a carbamate intermediate. The C-terminal ATP-grasp domain (referred to as the carbamoyl phosphate synthetic component) then catalyzes the phosphorylation of carbamate with the second ATP to form the end product carbamoyl phosphate. The reactive and unstable enzyme intermediates are sequentially channeled from one active site to the next through the interior of the protein over a distance of at least 96 A.</text>
</comment>
<comment type="similarity">
    <text evidence="1">Belongs to the CarB family.</text>
</comment>
<name>CARB_LACPL</name>
<sequence length="1058" mass="115757">MPKRTDIHKIMVIGSGPIIIGQAAEFDYSGTQACLALKELDYEVVLVNSNPATIMTDKEIADQVYLEPITLEFVSQILRKEHPDAILPTLGGQQGLNMAMELSKSGILDELHIELLGTKLSAIDQAEDREQFKALMEELGEPVPASGIARTVDEALAFAKQAGYPVIVRPAFTMGGTGGGIAETPQQLHDITENGLALSPVTQVLIEQSIAGYKEIEFEVMRDAADNAMVVCNMENFDPVGIHTGDSIVYAPVQTLADREVQLLRDAALKIIRALKIEGGCNVQLALDPNSFNYYIIEVNPRVSRSSALASKATGYPIAKMAAKIAVGLHLDEIKNPVTGTTYAEFEPALDYVVCKIPRWPFDKFTHADRRLGTQMKATGEVMAIGRNIEEATLKAVRSLEIGVHHVEEPALRSVDDDVLSDKLIHAQDDRLFYLTEAIRRGYPIDELAELTKINVFFLDKLLHIIEIEQALRTHTDDIETLTVAKRNGFADQTVADYWHETIDQVRDFRLAHKLAPVYKMVDTCAGEFASETPYYYGTYEFENESIVTKRPSVLVLGSGPIRIGQGVEFDYATVHSVKAIQKAGYEAIIMNSNPETVSTDFSVSDKLYFEPLTIEDVLNVIELEKPVGVIVQFGGQTAINLAKPLADHGIKILGTSVADVNRAEDRDEFDKVIKALAIPQPAGDTASDEATALAIADKLGYPVLVRPSYVLGGRAMEIVKKRTDLDYYMHNAVKVSHDHPVLVDSYLVGKECEVDAICDGQTVLIPGIMEHIERAGVHSGDSMAVYPPQSLSAAVQAQIVDYTEKLAIALNCVGMMNIQFVIHDDQVYVIEVNPRASRTVPFLSKVTNIPMAQVATRAILDQSLAEQGYQTGLVTPGPLVHVKAPVFSFSKLNRVDSLLGPEMKSTGEVMGSDVTMAKALYKAFEAAKLHVPSHGNVLLTVRDEDKPETVALAKRFHALGYQLLATRGTATALTTHGLPVTTVDKIDSGERDLLHRMEAGEIQVVINTVSDEEQAENDGTLIRNTSIMHGIPLFTALDTVAAILQVRESQSFVTQAL</sequence>
<proteinExistence type="inferred from homology"/>
<dbReference type="EC" id="6.3.4.16" evidence="1"/>
<dbReference type="EC" id="6.3.5.5" evidence="1"/>
<dbReference type="EMBL" id="Z54240">
    <property type="protein sequence ID" value="CAA91005.1"/>
    <property type="molecule type" value="Genomic_DNA"/>
</dbReference>
<dbReference type="EMBL" id="AL935263">
    <property type="protein sequence ID" value="CCC79821.1"/>
    <property type="molecule type" value="Genomic_DNA"/>
</dbReference>
<dbReference type="RefSeq" id="WP_011101886.1">
    <property type="nucleotide sequence ID" value="NC_004567.2"/>
</dbReference>
<dbReference type="RefSeq" id="YP_004890335.1">
    <property type="nucleotide sequence ID" value="NC_004567.2"/>
</dbReference>
<dbReference type="SMR" id="P77886"/>
<dbReference type="STRING" id="220668.lp_2700"/>
<dbReference type="EnsemblBacteria" id="CCC79821">
    <property type="protein sequence ID" value="CCC79821"/>
    <property type="gene ID" value="lp_2700"/>
</dbReference>
<dbReference type="KEGG" id="lpl:lp_2700"/>
<dbReference type="PATRIC" id="fig|220668.9.peg.2260"/>
<dbReference type="eggNOG" id="COG0458">
    <property type="taxonomic scope" value="Bacteria"/>
</dbReference>
<dbReference type="HOGENOM" id="CLU_000513_1_2_9"/>
<dbReference type="OrthoDB" id="9804197at2"/>
<dbReference type="PhylomeDB" id="P77886"/>
<dbReference type="UniPathway" id="UPA00068">
    <property type="reaction ID" value="UER00171"/>
</dbReference>
<dbReference type="UniPathway" id="UPA00070">
    <property type="reaction ID" value="UER00115"/>
</dbReference>
<dbReference type="Proteomes" id="UP000000432">
    <property type="component" value="Chromosome"/>
</dbReference>
<dbReference type="GO" id="GO:0005737">
    <property type="term" value="C:cytoplasm"/>
    <property type="evidence" value="ECO:0007669"/>
    <property type="project" value="TreeGrafter"/>
</dbReference>
<dbReference type="GO" id="GO:0005524">
    <property type="term" value="F:ATP binding"/>
    <property type="evidence" value="ECO:0007669"/>
    <property type="project" value="UniProtKB-UniRule"/>
</dbReference>
<dbReference type="GO" id="GO:0004087">
    <property type="term" value="F:carbamoyl-phosphate synthase (ammonia) activity"/>
    <property type="evidence" value="ECO:0007669"/>
    <property type="project" value="RHEA"/>
</dbReference>
<dbReference type="GO" id="GO:0004088">
    <property type="term" value="F:carbamoyl-phosphate synthase (glutamine-hydrolyzing) activity"/>
    <property type="evidence" value="ECO:0007669"/>
    <property type="project" value="UniProtKB-UniRule"/>
</dbReference>
<dbReference type="GO" id="GO:0046872">
    <property type="term" value="F:metal ion binding"/>
    <property type="evidence" value="ECO:0007669"/>
    <property type="project" value="UniProtKB-KW"/>
</dbReference>
<dbReference type="GO" id="GO:0044205">
    <property type="term" value="P:'de novo' UMP biosynthetic process"/>
    <property type="evidence" value="ECO:0007669"/>
    <property type="project" value="UniProtKB-UniRule"/>
</dbReference>
<dbReference type="GO" id="GO:0006541">
    <property type="term" value="P:glutamine metabolic process"/>
    <property type="evidence" value="ECO:0007669"/>
    <property type="project" value="TreeGrafter"/>
</dbReference>
<dbReference type="GO" id="GO:0006526">
    <property type="term" value="P:L-arginine biosynthetic process"/>
    <property type="evidence" value="ECO:0007669"/>
    <property type="project" value="UniProtKB-UniRule"/>
</dbReference>
<dbReference type="CDD" id="cd01424">
    <property type="entry name" value="MGS_CPS_II"/>
    <property type="match status" value="1"/>
</dbReference>
<dbReference type="FunFam" id="1.10.1030.10:FF:000002">
    <property type="entry name" value="Carbamoyl-phosphate synthase large chain"/>
    <property type="match status" value="1"/>
</dbReference>
<dbReference type="FunFam" id="3.30.1490.20:FF:000001">
    <property type="entry name" value="Carbamoyl-phosphate synthase large chain"/>
    <property type="match status" value="1"/>
</dbReference>
<dbReference type="FunFam" id="3.30.470.20:FF:000001">
    <property type="entry name" value="Carbamoyl-phosphate synthase large chain"/>
    <property type="match status" value="1"/>
</dbReference>
<dbReference type="FunFam" id="3.30.470.20:FF:000026">
    <property type="entry name" value="Carbamoyl-phosphate synthase large chain"/>
    <property type="match status" value="1"/>
</dbReference>
<dbReference type="FunFam" id="3.40.50.20:FF:000001">
    <property type="entry name" value="Carbamoyl-phosphate synthase large chain"/>
    <property type="match status" value="2"/>
</dbReference>
<dbReference type="Gene3D" id="3.40.50.20">
    <property type="match status" value="2"/>
</dbReference>
<dbReference type="Gene3D" id="3.30.1490.20">
    <property type="entry name" value="ATP-grasp fold, A domain"/>
    <property type="match status" value="1"/>
</dbReference>
<dbReference type="Gene3D" id="3.30.470.20">
    <property type="entry name" value="ATP-grasp fold, B domain"/>
    <property type="match status" value="2"/>
</dbReference>
<dbReference type="Gene3D" id="1.10.1030.10">
    <property type="entry name" value="Carbamoyl-phosphate synthetase, large subunit oligomerisation domain"/>
    <property type="match status" value="1"/>
</dbReference>
<dbReference type="Gene3D" id="3.40.50.1380">
    <property type="entry name" value="Methylglyoxal synthase-like domain"/>
    <property type="match status" value="1"/>
</dbReference>
<dbReference type="HAMAP" id="MF_01210_B">
    <property type="entry name" value="CPSase_L_chain_B"/>
    <property type="match status" value="1"/>
</dbReference>
<dbReference type="InterPro" id="IPR011761">
    <property type="entry name" value="ATP-grasp"/>
</dbReference>
<dbReference type="InterPro" id="IPR013815">
    <property type="entry name" value="ATP_grasp_subdomain_1"/>
</dbReference>
<dbReference type="InterPro" id="IPR006275">
    <property type="entry name" value="CarbamoylP_synth_lsu"/>
</dbReference>
<dbReference type="InterPro" id="IPR005480">
    <property type="entry name" value="CarbamoylP_synth_lsu_oligo"/>
</dbReference>
<dbReference type="InterPro" id="IPR036897">
    <property type="entry name" value="CarbamoylP_synth_lsu_oligo_sf"/>
</dbReference>
<dbReference type="InterPro" id="IPR005479">
    <property type="entry name" value="CbamoylP_synth_lsu-like_ATP-bd"/>
</dbReference>
<dbReference type="InterPro" id="IPR005483">
    <property type="entry name" value="CbamoylP_synth_lsu_CPSase_dom"/>
</dbReference>
<dbReference type="InterPro" id="IPR011607">
    <property type="entry name" value="MGS-like_dom"/>
</dbReference>
<dbReference type="InterPro" id="IPR036914">
    <property type="entry name" value="MGS-like_dom_sf"/>
</dbReference>
<dbReference type="InterPro" id="IPR033937">
    <property type="entry name" value="MGS_CPS_CarB"/>
</dbReference>
<dbReference type="InterPro" id="IPR016185">
    <property type="entry name" value="PreATP-grasp_dom_sf"/>
</dbReference>
<dbReference type="NCBIfam" id="TIGR01369">
    <property type="entry name" value="CPSaseII_lrg"/>
    <property type="match status" value="1"/>
</dbReference>
<dbReference type="NCBIfam" id="NF003671">
    <property type="entry name" value="PRK05294.1"/>
    <property type="match status" value="1"/>
</dbReference>
<dbReference type="NCBIfam" id="NF009455">
    <property type="entry name" value="PRK12815.1"/>
    <property type="match status" value="1"/>
</dbReference>
<dbReference type="PANTHER" id="PTHR11405:SF53">
    <property type="entry name" value="CARBAMOYL-PHOSPHATE SYNTHASE [AMMONIA], MITOCHONDRIAL"/>
    <property type="match status" value="1"/>
</dbReference>
<dbReference type="PANTHER" id="PTHR11405">
    <property type="entry name" value="CARBAMOYLTRANSFERASE FAMILY MEMBER"/>
    <property type="match status" value="1"/>
</dbReference>
<dbReference type="Pfam" id="PF02786">
    <property type="entry name" value="CPSase_L_D2"/>
    <property type="match status" value="2"/>
</dbReference>
<dbReference type="Pfam" id="PF02787">
    <property type="entry name" value="CPSase_L_D3"/>
    <property type="match status" value="1"/>
</dbReference>
<dbReference type="Pfam" id="PF02142">
    <property type="entry name" value="MGS"/>
    <property type="match status" value="1"/>
</dbReference>
<dbReference type="PRINTS" id="PR00098">
    <property type="entry name" value="CPSASE"/>
</dbReference>
<dbReference type="SMART" id="SM01096">
    <property type="entry name" value="CPSase_L_D3"/>
    <property type="match status" value="1"/>
</dbReference>
<dbReference type="SMART" id="SM00851">
    <property type="entry name" value="MGS"/>
    <property type="match status" value="1"/>
</dbReference>
<dbReference type="SUPFAM" id="SSF48108">
    <property type="entry name" value="Carbamoyl phosphate synthetase, large subunit connection domain"/>
    <property type="match status" value="1"/>
</dbReference>
<dbReference type="SUPFAM" id="SSF56059">
    <property type="entry name" value="Glutathione synthetase ATP-binding domain-like"/>
    <property type="match status" value="2"/>
</dbReference>
<dbReference type="SUPFAM" id="SSF52335">
    <property type="entry name" value="Methylglyoxal synthase-like"/>
    <property type="match status" value="1"/>
</dbReference>
<dbReference type="SUPFAM" id="SSF52440">
    <property type="entry name" value="PreATP-grasp domain"/>
    <property type="match status" value="2"/>
</dbReference>
<dbReference type="PROSITE" id="PS50975">
    <property type="entry name" value="ATP_GRASP"/>
    <property type="match status" value="2"/>
</dbReference>
<dbReference type="PROSITE" id="PS00866">
    <property type="entry name" value="CPSASE_1"/>
    <property type="match status" value="2"/>
</dbReference>
<dbReference type="PROSITE" id="PS00867">
    <property type="entry name" value="CPSASE_2"/>
    <property type="match status" value="2"/>
</dbReference>
<dbReference type="PROSITE" id="PS51855">
    <property type="entry name" value="MGS"/>
    <property type="match status" value="1"/>
</dbReference>
<accession>P77886</accession>
<accession>F9URI2</accession>
<evidence type="ECO:0000255" key="1">
    <source>
        <dbReference type="HAMAP-Rule" id="MF_01210"/>
    </source>
</evidence>
<evidence type="ECO:0000305" key="2"/>
<gene>
    <name type="primary">pyrAB</name>
    <name type="ordered locus">lp_2700</name>
</gene>
<protein>
    <recommendedName>
        <fullName evidence="2">Carbamoyl phosphate synthase pyrimidine-specific large chain</fullName>
        <ecNumber evidence="1">6.3.4.16</ecNumber>
        <ecNumber evidence="1">6.3.5.5</ecNumber>
    </recommendedName>
    <alternativeName>
        <fullName evidence="1">Carbamoyl phosphate synthetase ammonia chain</fullName>
    </alternativeName>
</protein>